<feature type="chain" id="PRO_0000108484" description="Transcriptional regulator MraZ">
    <location>
        <begin position="1"/>
        <end position="152"/>
    </location>
</feature>
<feature type="domain" description="SpoVT-AbrB 1" evidence="2">
    <location>
        <begin position="5"/>
        <end position="52"/>
    </location>
</feature>
<feature type="domain" description="SpoVT-AbrB 2" evidence="2">
    <location>
        <begin position="81"/>
        <end position="124"/>
    </location>
</feature>
<dbReference type="EMBL" id="BX950851">
    <property type="protein sequence ID" value="CAG76723.1"/>
    <property type="molecule type" value="Genomic_DNA"/>
</dbReference>
<dbReference type="RefSeq" id="WP_011095323.1">
    <property type="nucleotide sequence ID" value="NC_004547.2"/>
</dbReference>
<dbReference type="SMR" id="Q6D0H4"/>
<dbReference type="STRING" id="218491.ECA3824"/>
<dbReference type="GeneID" id="57210443"/>
<dbReference type="KEGG" id="eca:ECA3824"/>
<dbReference type="PATRIC" id="fig|218491.5.peg.3879"/>
<dbReference type="eggNOG" id="COG2001">
    <property type="taxonomic scope" value="Bacteria"/>
</dbReference>
<dbReference type="HOGENOM" id="CLU_107907_2_0_6"/>
<dbReference type="OrthoDB" id="9807753at2"/>
<dbReference type="Proteomes" id="UP000007966">
    <property type="component" value="Chromosome"/>
</dbReference>
<dbReference type="GO" id="GO:0005737">
    <property type="term" value="C:cytoplasm"/>
    <property type="evidence" value="ECO:0007669"/>
    <property type="project" value="UniProtKB-UniRule"/>
</dbReference>
<dbReference type="GO" id="GO:0009295">
    <property type="term" value="C:nucleoid"/>
    <property type="evidence" value="ECO:0007669"/>
    <property type="project" value="UniProtKB-SubCell"/>
</dbReference>
<dbReference type="GO" id="GO:0003700">
    <property type="term" value="F:DNA-binding transcription factor activity"/>
    <property type="evidence" value="ECO:0007669"/>
    <property type="project" value="UniProtKB-UniRule"/>
</dbReference>
<dbReference type="GO" id="GO:0000976">
    <property type="term" value="F:transcription cis-regulatory region binding"/>
    <property type="evidence" value="ECO:0007669"/>
    <property type="project" value="TreeGrafter"/>
</dbReference>
<dbReference type="GO" id="GO:2000143">
    <property type="term" value="P:negative regulation of DNA-templated transcription initiation"/>
    <property type="evidence" value="ECO:0007669"/>
    <property type="project" value="TreeGrafter"/>
</dbReference>
<dbReference type="CDD" id="cd16321">
    <property type="entry name" value="MraZ_C"/>
    <property type="match status" value="1"/>
</dbReference>
<dbReference type="CDD" id="cd16320">
    <property type="entry name" value="MraZ_N"/>
    <property type="match status" value="1"/>
</dbReference>
<dbReference type="FunFam" id="3.40.1550.20:FF:000001">
    <property type="entry name" value="Transcriptional regulator MraZ"/>
    <property type="match status" value="1"/>
</dbReference>
<dbReference type="Gene3D" id="3.40.1550.20">
    <property type="entry name" value="Transcriptional regulator MraZ domain"/>
    <property type="match status" value="1"/>
</dbReference>
<dbReference type="HAMAP" id="MF_01008">
    <property type="entry name" value="MraZ"/>
    <property type="match status" value="1"/>
</dbReference>
<dbReference type="InterPro" id="IPR003444">
    <property type="entry name" value="MraZ"/>
</dbReference>
<dbReference type="InterPro" id="IPR035644">
    <property type="entry name" value="MraZ_C"/>
</dbReference>
<dbReference type="InterPro" id="IPR020603">
    <property type="entry name" value="MraZ_dom"/>
</dbReference>
<dbReference type="InterPro" id="IPR035642">
    <property type="entry name" value="MraZ_N"/>
</dbReference>
<dbReference type="InterPro" id="IPR038619">
    <property type="entry name" value="MraZ_sf"/>
</dbReference>
<dbReference type="InterPro" id="IPR007159">
    <property type="entry name" value="SpoVT-AbrB_dom"/>
</dbReference>
<dbReference type="InterPro" id="IPR037914">
    <property type="entry name" value="SpoVT-AbrB_sf"/>
</dbReference>
<dbReference type="NCBIfam" id="TIGR00242">
    <property type="entry name" value="division/cell wall cluster transcriptional repressor MraZ"/>
    <property type="match status" value="1"/>
</dbReference>
<dbReference type="PANTHER" id="PTHR34701">
    <property type="entry name" value="TRANSCRIPTIONAL REGULATOR MRAZ"/>
    <property type="match status" value="1"/>
</dbReference>
<dbReference type="PANTHER" id="PTHR34701:SF1">
    <property type="entry name" value="TRANSCRIPTIONAL REGULATOR MRAZ"/>
    <property type="match status" value="1"/>
</dbReference>
<dbReference type="Pfam" id="PF02381">
    <property type="entry name" value="MraZ"/>
    <property type="match status" value="2"/>
</dbReference>
<dbReference type="SUPFAM" id="SSF89447">
    <property type="entry name" value="AbrB/MazE/MraZ-like"/>
    <property type="match status" value="1"/>
</dbReference>
<dbReference type="PROSITE" id="PS51740">
    <property type="entry name" value="SPOVT_ABRB"/>
    <property type="match status" value="2"/>
</dbReference>
<gene>
    <name evidence="1" type="primary">mraZ</name>
    <name type="ordered locus">ECA3824</name>
</gene>
<evidence type="ECO:0000255" key="1">
    <source>
        <dbReference type="HAMAP-Rule" id="MF_01008"/>
    </source>
</evidence>
<evidence type="ECO:0000255" key="2">
    <source>
        <dbReference type="PROSITE-ProRule" id="PRU01076"/>
    </source>
</evidence>
<reference key="1">
    <citation type="journal article" date="2004" name="Proc. Natl. Acad. Sci. U.S.A.">
        <title>Genome sequence of the enterobacterial phytopathogen Erwinia carotovora subsp. atroseptica and characterization of virulence factors.</title>
        <authorList>
            <person name="Bell K.S."/>
            <person name="Sebaihia M."/>
            <person name="Pritchard L."/>
            <person name="Holden M.T.G."/>
            <person name="Hyman L.J."/>
            <person name="Holeva M.C."/>
            <person name="Thomson N.R."/>
            <person name="Bentley S.D."/>
            <person name="Churcher L.J.C."/>
            <person name="Mungall K."/>
            <person name="Atkin R."/>
            <person name="Bason N."/>
            <person name="Brooks K."/>
            <person name="Chillingworth T."/>
            <person name="Clark K."/>
            <person name="Doggett J."/>
            <person name="Fraser A."/>
            <person name="Hance Z."/>
            <person name="Hauser H."/>
            <person name="Jagels K."/>
            <person name="Moule S."/>
            <person name="Norbertczak H."/>
            <person name="Ormond D."/>
            <person name="Price C."/>
            <person name="Quail M.A."/>
            <person name="Sanders M."/>
            <person name="Walker D."/>
            <person name="Whitehead S."/>
            <person name="Salmond G.P.C."/>
            <person name="Birch P.R.J."/>
            <person name="Parkhill J."/>
            <person name="Toth I.K."/>
        </authorList>
    </citation>
    <scope>NUCLEOTIDE SEQUENCE [LARGE SCALE GENOMIC DNA]</scope>
    <source>
        <strain>SCRI 1043 / ATCC BAA-672</strain>
    </source>
</reference>
<sequence length="152" mass="17634">MFRGATLVNLDSKGRLAVPTRYREMLYGESQGQMVCTIDLHQPCLLLYPLPEWEIIEQKLSRLSSMNPAERRVQRLLLGHASECQMDSAGRLLIANTLRQHADLKKEVMLVGQFNKFELWDEQTWYQQVKDDIDAEQSTQEPLSERLQDLSL</sequence>
<keyword id="KW-0963">Cytoplasm</keyword>
<keyword id="KW-0238">DNA-binding</keyword>
<keyword id="KW-1185">Reference proteome</keyword>
<keyword id="KW-0677">Repeat</keyword>
<keyword id="KW-0678">Repressor</keyword>
<keyword id="KW-0804">Transcription</keyword>
<keyword id="KW-0805">Transcription regulation</keyword>
<proteinExistence type="inferred from homology"/>
<name>MRAZ_PECAS</name>
<comment type="function">
    <text evidence="1">Negatively regulates its own expression and that of the subsequent genes in the proximal part of the division and cell wall (dcw) gene cluster. Acts by binding directly to DNA. May also regulate the expression of genes outside the dcw cluster.</text>
</comment>
<comment type="subunit">
    <text evidence="1">Forms oligomers.</text>
</comment>
<comment type="subcellular location">
    <subcellularLocation>
        <location evidence="1">Cytoplasm</location>
        <location evidence="1">Nucleoid</location>
    </subcellularLocation>
</comment>
<comment type="similarity">
    <text evidence="1">Belongs to the MraZ family.</text>
</comment>
<accession>Q6D0H4</accession>
<organism>
    <name type="scientific">Pectobacterium atrosepticum (strain SCRI 1043 / ATCC BAA-672)</name>
    <name type="common">Erwinia carotovora subsp. atroseptica</name>
    <dbReference type="NCBI Taxonomy" id="218491"/>
    <lineage>
        <taxon>Bacteria</taxon>
        <taxon>Pseudomonadati</taxon>
        <taxon>Pseudomonadota</taxon>
        <taxon>Gammaproteobacteria</taxon>
        <taxon>Enterobacterales</taxon>
        <taxon>Pectobacteriaceae</taxon>
        <taxon>Pectobacterium</taxon>
    </lineage>
</organism>
<protein>
    <recommendedName>
        <fullName>Transcriptional regulator MraZ</fullName>
    </recommendedName>
</protein>